<name>HEM1_SHEPW</name>
<reference key="1">
    <citation type="journal article" date="2008" name="PLoS ONE">
        <title>Environmental adaptation: genomic analysis of the piezotolerant and psychrotolerant deep-sea iron reducing bacterium Shewanella piezotolerans WP3.</title>
        <authorList>
            <person name="Wang F."/>
            <person name="Wang J."/>
            <person name="Jian H."/>
            <person name="Zhang B."/>
            <person name="Li S."/>
            <person name="Wang F."/>
            <person name="Zeng X."/>
            <person name="Gao L."/>
            <person name="Bartlett D.H."/>
            <person name="Yu J."/>
            <person name="Hu S."/>
            <person name="Xiao X."/>
        </authorList>
    </citation>
    <scope>NUCLEOTIDE SEQUENCE [LARGE SCALE GENOMIC DNA]</scope>
    <source>
        <strain>WP3 / JCM 13877</strain>
    </source>
</reference>
<comment type="function">
    <text evidence="1">Catalyzes the NADPH-dependent reduction of glutamyl-tRNA(Glu) to glutamate 1-semialdehyde (GSA).</text>
</comment>
<comment type="catalytic activity">
    <reaction evidence="1">
        <text>(S)-4-amino-5-oxopentanoate + tRNA(Glu) + NADP(+) = L-glutamyl-tRNA(Glu) + NADPH + H(+)</text>
        <dbReference type="Rhea" id="RHEA:12344"/>
        <dbReference type="Rhea" id="RHEA-COMP:9663"/>
        <dbReference type="Rhea" id="RHEA-COMP:9680"/>
        <dbReference type="ChEBI" id="CHEBI:15378"/>
        <dbReference type="ChEBI" id="CHEBI:57501"/>
        <dbReference type="ChEBI" id="CHEBI:57783"/>
        <dbReference type="ChEBI" id="CHEBI:58349"/>
        <dbReference type="ChEBI" id="CHEBI:78442"/>
        <dbReference type="ChEBI" id="CHEBI:78520"/>
        <dbReference type="EC" id="1.2.1.70"/>
    </reaction>
</comment>
<comment type="pathway">
    <text evidence="1">Porphyrin-containing compound metabolism; protoporphyrin-IX biosynthesis; 5-aminolevulinate from L-glutamyl-tRNA(Glu): step 1/2.</text>
</comment>
<comment type="subunit">
    <text evidence="1">Homodimer.</text>
</comment>
<comment type="domain">
    <text evidence="1">Possesses an unusual extended V-shaped dimeric structure with each monomer consisting of three distinct domains arranged along a curved 'spinal' alpha-helix. The N-terminal catalytic domain specifically recognizes the glutamate moiety of the substrate. The second domain is the NADPH-binding domain, and the third C-terminal domain is responsible for dimerization.</text>
</comment>
<comment type="miscellaneous">
    <text evidence="1">During catalysis, the active site Cys acts as a nucleophile attacking the alpha-carbonyl group of tRNA-bound glutamate with the formation of a thioester intermediate between enzyme and glutamate, and the concomitant release of tRNA(Glu). The thioester intermediate is finally reduced by direct hydride transfer from NADPH, to form the product GSA.</text>
</comment>
<comment type="similarity">
    <text evidence="1">Belongs to the glutamyl-tRNA reductase family.</text>
</comment>
<protein>
    <recommendedName>
        <fullName evidence="1">Glutamyl-tRNA reductase</fullName>
        <shortName evidence="1">GluTR</shortName>
        <ecNumber evidence="1">1.2.1.70</ecNumber>
    </recommendedName>
</protein>
<accession>B8CQV3</accession>
<feature type="chain" id="PRO_1000190540" description="Glutamyl-tRNA reductase">
    <location>
        <begin position="1"/>
        <end position="416"/>
    </location>
</feature>
<feature type="active site" description="Nucleophile" evidence="1">
    <location>
        <position position="50"/>
    </location>
</feature>
<feature type="binding site" evidence="1">
    <location>
        <begin position="49"/>
        <end position="52"/>
    </location>
    <ligand>
        <name>substrate</name>
    </ligand>
</feature>
<feature type="binding site" evidence="1">
    <location>
        <position position="105"/>
    </location>
    <ligand>
        <name>substrate</name>
    </ligand>
</feature>
<feature type="binding site" evidence="1">
    <location>
        <begin position="110"/>
        <end position="112"/>
    </location>
    <ligand>
        <name>substrate</name>
    </ligand>
</feature>
<feature type="binding site" evidence="1">
    <location>
        <position position="116"/>
    </location>
    <ligand>
        <name>substrate</name>
    </ligand>
</feature>
<feature type="binding site" evidence="1">
    <location>
        <begin position="185"/>
        <end position="190"/>
    </location>
    <ligand>
        <name>NADP(+)</name>
        <dbReference type="ChEBI" id="CHEBI:58349"/>
    </ligand>
</feature>
<feature type="site" description="Important for activity" evidence="1">
    <location>
        <position position="95"/>
    </location>
</feature>
<keyword id="KW-0521">NADP</keyword>
<keyword id="KW-0560">Oxidoreductase</keyword>
<keyword id="KW-0627">Porphyrin biosynthesis</keyword>
<dbReference type="EC" id="1.2.1.70" evidence="1"/>
<dbReference type="EMBL" id="CP000472">
    <property type="protein sequence ID" value="ACJ30569.1"/>
    <property type="molecule type" value="Genomic_DNA"/>
</dbReference>
<dbReference type="RefSeq" id="WP_020913911.1">
    <property type="nucleotide sequence ID" value="NC_011566.1"/>
</dbReference>
<dbReference type="SMR" id="B8CQV3"/>
<dbReference type="STRING" id="225849.swp_3892"/>
<dbReference type="KEGG" id="swp:swp_3892"/>
<dbReference type="eggNOG" id="COG0373">
    <property type="taxonomic scope" value="Bacteria"/>
</dbReference>
<dbReference type="HOGENOM" id="CLU_035113_2_2_6"/>
<dbReference type="OrthoDB" id="110209at2"/>
<dbReference type="UniPathway" id="UPA00251">
    <property type="reaction ID" value="UER00316"/>
</dbReference>
<dbReference type="Proteomes" id="UP000000753">
    <property type="component" value="Chromosome"/>
</dbReference>
<dbReference type="GO" id="GO:0008883">
    <property type="term" value="F:glutamyl-tRNA reductase activity"/>
    <property type="evidence" value="ECO:0007669"/>
    <property type="project" value="UniProtKB-UniRule"/>
</dbReference>
<dbReference type="GO" id="GO:0050661">
    <property type="term" value="F:NADP binding"/>
    <property type="evidence" value="ECO:0007669"/>
    <property type="project" value="InterPro"/>
</dbReference>
<dbReference type="GO" id="GO:0019353">
    <property type="term" value="P:protoporphyrinogen IX biosynthetic process from glutamate"/>
    <property type="evidence" value="ECO:0007669"/>
    <property type="project" value="TreeGrafter"/>
</dbReference>
<dbReference type="CDD" id="cd05213">
    <property type="entry name" value="NAD_bind_Glutamyl_tRNA_reduct"/>
    <property type="match status" value="1"/>
</dbReference>
<dbReference type="FunFam" id="3.30.460.30:FF:000001">
    <property type="entry name" value="Glutamyl-tRNA reductase"/>
    <property type="match status" value="1"/>
</dbReference>
<dbReference type="FunFam" id="3.40.50.720:FF:000031">
    <property type="entry name" value="Glutamyl-tRNA reductase"/>
    <property type="match status" value="1"/>
</dbReference>
<dbReference type="Gene3D" id="3.30.460.30">
    <property type="entry name" value="Glutamyl-tRNA reductase, N-terminal domain"/>
    <property type="match status" value="1"/>
</dbReference>
<dbReference type="Gene3D" id="3.40.50.720">
    <property type="entry name" value="NAD(P)-binding Rossmann-like Domain"/>
    <property type="match status" value="1"/>
</dbReference>
<dbReference type="HAMAP" id="MF_00087">
    <property type="entry name" value="Glu_tRNA_reductase"/>
    <property type="match status" value="1"/>
</dbReference>
<dbReference type="InterPro" id="IPR000343">
    <property type="entry name" value="4pyrrol_synth_GluRdtase"/>
</dbReference>
<dbReference type="InterPro" id="IPR015896">
    <property type="entry name" value="4pyrrol_synth_GluRdtase_dimer"/>
</dbReference>
<dbReference type="InterPro" id="IPR015895">
    <property type="entry name" value="4pyrrol_synth_GluRdtase_N"/>
</dbReference>
<dbReference type="InterPro" id="IPR018214">
    <property type="entry name" value="GluRdtase_CS"/>
</dbReference>
<dbReference type="InterPro" id="IPR036453">
    <property type="entry name" value="GluRdtase_dimer_dom_sf"/>
</dbReference>
<dbReference type="InterPro" id="IPR036343">
    <property type="entry name" value="GluRdtase_N_sf"/>
</dbReference>
<dbReference type="InterPro" id="IPR036291">
    <property type="entry name" value="NAD(P)-bd_dom_sf"/>
</dbReference>
<dbReference type="InterPro" id="IPR006151">
    <property type="entry name" value="Shikm_DH/Glu-tRNA_Rdtase"/>
</dbReference>
<dbReference type="NCBIfam" id="TIGR01035">
    <property type="entry name" value="hemA"/>
    <property type="match status" value="1"/>
</dbReference>
<dbReference type="PANTHER" id="PTHR43013">
    <property type="entry name" value="GLUTAMYL-TRNA REDUCTASE"/>
    <property type="match status" value="1"/>
</dbReference>
<dbReference type="PANTHER" id="PTHR43013:SF1">
    <property type="entry name" value="GLUTAMYL-TRNA REDUCTASE"/>
    <property type="match status" value="1"/>
</dbReference>
<dbReference type="Pfam" id="PF00745">
    <property type="entry name" value="GlutR_dimer"/>
    <property type="match status" value="1"/>
</dbReference>
<dbReference type="Pfam" id="PF05201">
    <property type="entry name" value="GlutR_N"/>
    <property type="match status" value="1"/>
</dbReference>
<dbReference type="Pfam" id="PF01488">
    <property type="entry name" value="Shikimate_DH"/>
    <property type="match status" value="1"/>
</dbReference>
<dbReference type="PIRSF" id="PIRSF000445">
    <property type="entry name" value="4pyrrol_synth_GluRdtase"/>
    <property type="match status" value="1"/>
</dbReference>
<dbReference type="SUPFAM" id="SSF69742">
    <property type="entry name" value="Glutamyl tRNA-reductase catalytic, N-terminal domain"/>
    <property type="match status" value="1"/>
</dbReference>
<dbReference type="SUPFAM" id="SSF69075">
    <property type="entry name" value="Glutamyl tRNA-reductase dimerization domain"/>
    <property type="match status" value="1"/>
</dbReference>
<dbReference type="SUPFAM" id="SSF51735">
    <property type="entry name" value="NAD(P)-binding Rossmann-fold domains"/>
    <property type="match status" value="1"/>
</dbReference>
<dbReference type="PROSITE" id="PS00747">
    <property type="entry name" value="GLUTR"/>
    <property type="match status" value="1"/>
</dbReference>
<organism>
    <name type="scientific">Shewanella piezotolerans (strain WP3 / JCM 13877)</name>
    <dbReference type="NCBI Taxonomy" id="225849"/>
    <lineage>
        <taxon>Bacteria</taxon>
        <taxon>Pseudomonadati</taxon>
        <taxon>Pseudomonadota</taxon>
        <taxon>Gammaproteobacteria</taxon>
        <taxon>Alteromonadales</taxon>
        <taxon>Shewanellaceae</taxon>
        <taxon>Shewanella</taxon>
    </lineage>
</organism>
<evidence type="ECO:0000255" key="1">
    <source>
        <dbReference type="HAMAP-Rule" id="MF_00087"/>
    </source>
</evidence>
<gene>
    <name evidence="1" type="primary">hemA</name>
    <name type="ordered locus">swp_3892</name>
</gene>
<proteinExistence type="inferred from homology"/>
<sequence>MSLVAIGINHKTATVDLREKVAFAPDRIHDAMKSLATHTQSGEAVIISTCNRTELYCNNGEEADVVQWLEDYHQLSHADVEPCLYQFKDQEAVKHLMRVSAGLDSLILGEPQILGQVKQSFVKAKEAGTVATTMDRLFQNTFSVAKKIRTETEIGAAAVSVAFAAVSMAKHIFSSLSTTQVLLVGAGETIELVARHLKDNGVKTMVVANRTISRAEAMCDEFGATAITLEQIPDFLPKADIVISSTASPLPILGKGMVEKALKQRRHQPMLLVDIAVPRDIEAEVADLDDAFLYTVDDLQSIIEQNMASRREAAEQAELIADDQSYQFMEWIRSLESVDSIREYRTQSMAIKDELVERAVNKLAQGGNSEQVLLELANKLTNKLIHAPTQALTAASRQGDLNSLGQLRTMLGLDKD</sequence>